<dbReference type="EC" id="7.1.2.2" evidence="1"/>
<dbReference type="EMBL" id="EF380354">
    <property type="protein sequence ID" value="ABQ52526.1"/>
    <property type="molecule type" value="Genomic_DNA"/>
</dbReference>
<dbReference type="RefSeq" id="YP_001294277.1">
    <property type="nucleotide sequence ID" value="NC_009600.1"/>
</dbReference>
<dbReference type="SMR" id="A6MMV1"/>
<dbReference type="GeneID" id="5236800"/>
<dbReference type="GO" id="GO:0009535">
    <property type="term" value="C:chloroplast thylakoid membrane"/>
    <property type="evidence" value="ECO:0007669"/>
    <property type="project" value="UniProtKB-SubCell"/>
</dbReference>
<dbReference type="GO" id="GO:0005739">
    <property type="term" value="C:mitochondrion"/>
    <property type="evidence" value="ECO:0007669"/>
    <property type="project" value="GOC"/>
</dbReference>
<dbReference type="GO" id="GO:0045259">
    <property type="term" value="C:proton-transporting ATP synthase complex"/>
    <property type="evidence" value="ECO:0007669"/>
    <property type="project" value="UniProtKB-KW"/>
</dbReference>
<dbReference type="GO" id="GO:0005524">
    <property type="term" value="F:ATP binding"/>
    <property type="evidence" value="ECO:0007669"/>
    <property type="project" value="UniProtKB-UniRule"/>
</dbReference>
<dbReference type="GO" id="GO:0016887">
    <property type="term" value="F:ATP hydrolysis activity"/>
    <property type="evidence" value="ECO:0007669"/>
    <property type="project" value="InterPro"/>
</dbReference>
<dbReference type="GO" id="GO:0046933">
    <property type="term" value="F:proton-transporting ATP synthase activity, rotational mechanism"/>
    <property type="evidence" value="ECO:0007669"/>
    <property type="project" value="UniProtKB-UniRule"/>
</dbReference>
<dbReference type="GO" id="GO:0042776">
    <property type="term" value="P:proton motive force-driven mitochondrial ATP synthesis"/>
    <property type="evidence" value="ECO:0007669"/>
    <property type="project" value="TreeGrafter"/>
</dbReference>
<dbReference type="CDD" id="cd18110">
    <property type="entry name" value="ATP-synt_F1_beta_C"/>
    <property type="match status" value="1"/>
</dbReference>
<dbReference type="CDD" id="cd18115">
    <property type="entry name" value="ATP-synt_F1_beta_N"/>
    <property type="match status" value="1"/>
</dbReference>
<dbReference type="CDD" id="cd01133">
    <property type="entry name" value="F1-ATPase_beta_CD"/>
    <property type="match status" value="1"/>
</dbReference>
<dbReference type="FunFam" id="1.10.1140.10:FF:000001">
    <property type="entry name" value="ATP synthase subunit beta"/>
    <property type="match status" value="1"/>
</dbReference>
<dbReference type="FunFam" id="3.40.50.300:FF:000004">
    <property type="entry name" value="ATP synthase subunit beta"/>
    <property type="match status" value="1"/>
</dbReference>
<dbReference type="FunFam" id="2.40.10.170:FF:000002">
    <property type="entry name" value="ATP synthase subunit beta, chloroplastic"/>
    <property type="match status" value="1"/>
</dbReference>
<dbReference type="Gene3D" id="2.40.10.170">
    <property type="match status" value="1"/>
</dbReference>
<dbReference type="Gene3D" id="1.10.1140.10">
    <property type="entry name" value="Bovine Mitochondrial F1-atpase, Atp Synthase Beta Chain, Chain D, domain 3"/>
    <property type="match status" value="1"/>
</dbReference>
<dbReference type="Gene3D" id="3.40.50.300">
    <property type="entry name" value="P-loop containing nucleotide triphosphate hydrolases"/>
    <property type="match status" value="1"/>
</dbReference>
<dbReference type="HAMAP" id="MF_01347">
    <property type="entry name" value="ATP_synth_beta_bact"/>
    <property type="match status" value="1"/>
</dbReference>
<dbReference type="InterPro" id="IPR003593">
    <property type="entry name" value="AAA+_ATPase"/>
</dbReference>
<dbReference type="InterPro" id="IPR055190">
    <property type="entry name" value="ATP-synt_VA_C"/>
</dbReference>
<dbReference type="InterPro" id="IPR005722">
    <property type="entry name" value="ATP_synth_F1_bsu"/>
</dbReference>
<dbReference type="InterPro" id="IPR020003">
    <property type="entry name" value="ATPase_a/bsu_AS"/>
</dbReference>
<dbReference type="InterPro" id="IPR050053">
    <property type="entry name" value="ATPase_alpha/beta_chains"/>
</dbReference>
<dbReference type="InterPro" id="IPR004100">
    <property type="entry name" value="ATPase_F1/V1/A1_a/bsu_N"/>
</dbReference>
<dbReference type="InterPro" id="IPR036121">
    <property type="entry name" value="ATPase_F1/V1/A1_a/bsu_N_sf"/>
</dbReference>
<dbReference type="InterPro" id="IPR000194">
    <property type="entry name" value="ATPase_F1/V1/A1_a/bsu_nucl-bd"/>
</dbReference>
<dbReference type="InterPro" id="IPR024034">
    <property type="entry name" value="ATPase_F1/V1_b/a_C"/>
</dbReference>
<dbReference type="InterPro" id="IPR027417">
    <property type="entry name" value="P-loop_NTPase"/>
</dbReference>
<dbReference type="NCBIfam" id="TIGR01039">
    <property type="entry name" value="atpD"/>
    <property type="match status" value="1"/>
</dbReference>
<dbReference type="PANTHER" id="PTHR15184">
    <property type="entry name" value="ATP SYNTHASE"/>
    <property type="match status" value="1"/>
</dbReference>
<dbReference type="PANTHER" id="PTHR15184:SF76">
    <property type="entry name" value="ATP SYNTHASE SUBUNIT BETA, CHLOROPLASTIC"/>
    <property type="match status" value="1"/>
</dbReference>
<dbReference type="Pfam" id="PF00006">
    <property type="entry name" value="ATP-synt_ab"/>
    <property type="match status" value="1"/>
</dbReference>
<dbReference type="Pfam" id="PF02874">
    <property type="entry name" value="ATP-synt_ab_N"/>
    <property type="match status" value="1"/>
</dbReference>
<dbReference type="Pfam" id="PF22919">
    <property type="entry name" value="ATP-synt_VA_C"/>
    <property type="match status" value="1"/>
</dbReference>
<dbReference type="SMART" id="SM00382">
    <property type="entry name" value="AAA"/>
    <property type="match status" value="1"/>
</dbReference>
<dbReference type="SUPFAM" id="SSF47917">
    <property type="entry name" value="C-terminal domain of alpha and beta subunits of F1 ATP synthase"/>
    <property type="match status" value="1"/>
</dbReference>
<dbReference type="SUPFAM" id="SSF50615">
    <property type="entry name" value="N-terminal domain of alpha and beta subunits of F1 ATP synthase"/>
    <property type="match status" value="1"/>
</dbReference>
<dbReference type="SUPFAM" id="SSF52540">
    <property type="entry name" value="P-loop containing nucleoside triphosphate hydrolases"/>
    <property type="match status" value="1"/>
</dbReference>
<dbReference type="PROSITE" id="PS00152">
    <property type="entry name" value="ATPASE_ALPHA_BETA"/>
    <property type="match status" value="1"/>
</dbReference>
<organism>
    <name type="scientific">Illicium oligandrum</name>
    <name type="common">Star anise</name>
    <dbReference type="NCBI Taxonomy" id="145286"/>
    <lineage>
        <taxon>Eukaryota</taxon>
        <taxon>Viridiplantae</taxon>
        <taxon>Streptophyta</taxon>
        <taxon>Embryophyta</taxon>
        <taxon>Tracheophyta</taxon>
        <taxon>Spermatophyta</taxon>
        <taxon>Magnoliopsida</taxon>
        <taxon>Austrobaileyales</taxon>
        <taxon>Schisandraceae</taxon>
        <taxon>Illicium</taxon>
    </lineage>
</organism>
<geneLocation type="chloroplast"/>
<protein>
    <recommendedName>
        <fullName evidence="1">ATP synthase subunit beta, chloroplastic</fullName>
        <ecNumber evidence="1">7.1.2.2</ecNumber>
    </recommendedName>
    <alternativeName>
        <fullName evidence="1">ATP synthase F1 sector subunit beta</fullName>
    </alternativeName>
    <alternativeName>
        <fullName evidence="1">F-ATPase subunit beta</fullName>
    </alternativeName>
</protein>
<keyword id="KW-0066">ATP synthesis</keyword>
<keyword id="KW-0067">ATP-binding</keyword>
<keyword id="KW-0139">CF(1)</keyword>
<keyword id="KW-0150">Chloroplast</keyword>
<keyword id="KW-0375">Hydrogen ion transport</keyword>
<keyword id="KW-0406">Ion transport</keyword>
<keyword id="KW-0472">Membrane</keyword>
<keyword id="KW-0547">Nucleotide-binding</keyword>
<keyword id="KW-0934">Plastid</keyword>
<keyword id="KW-0793">Thylakoid</keyword>
<keyword id="KW-1278">Translocase</keyword>
<keyword id="KW-0813">Transport</keyword>
<name>ATPB_ILLOL</name>
<evidence type="ECO:0000255" key="1">
    <source>
        <dbReference type="HAMAP-Rule" id="MF_01347"/>
    </source>
</evidence>
<accession>A6MMV1</accession>
<feature type="chain" id="PRO_0000339621" description="ATP synthase subunit beta, chloroplastic">
    <location>
        <begin position="1"/>
        <end position="498"/>
    </location>
</feature>
<feature type="binding site" evidence="1">
    <location>
        <begin position="172"/>
        <end position="179"/>
    </location>
    <ligand>
        <name>ATP</name>
        <dbReference type="ChEBI" id="CHEBI:30616"/>
    </ligand>
</feature>
<proteinExistence type="inferred from homology"/>
<reference key="1">
    <citation type="journal article" date="2007" name="Mol. Phylogenet. Evol.">
        <title>Phylogenetic and evolutionary implications of complete chloroplast genome sequences of four early-diverging angiosperms: Buxus (Buxaceae), Chloranthus (Chloranthaceae), Dioscorea (Dioscoreaceae), and Illicium (Schisandraceae).</title>
        <authorList>
            <person name="Hansen D.R."/>
            <person name="Dastidar S.G."/>
            <person name="Cai Z."/>
            <person name="Penaflor C."/>
            <person name="Kuehl J.V."/>
            <person name="Boore J.L."/>
            <person name="Jansen R.K."/>
        </authorList>
    </citation>
    <scope>NUCLEOTIDE SEQUENCE [LARGE SCALE GENOMIC DNA]</scope>
</reference>
<sequence>MRINPTTSGPGVSTLEERNLGRITQIIGPVLDVAFPPGKMPNIYNSLVVKGRDTVGQQINVTCEVQQLLGNNRIRAVAMSATDGLMRGMEVIDTGAPLSVPVGGSTLGRIFNVLGEPVDNLGPVDTCTTSPIHRSAPAFIQLDTKFSIFETGIKVVDLLAPYRRGGKIGLFGGAGVGKTVLIMELINNIAKAHGGVSVSGGVGERTREGNDLYMEMKESGVINEQNIAESKVALVYGQMNEPPGARMRVGLTALTMAEYFRDVNEQDVLLFIDNISRFVQAGSEVSALLGRMPSAVGYQPTLSTEMGSLQERITSTKEGSITSIQAVYVPADDLTDPAPATTFAHLDATTVLSRGLAAKGIYPAVDPLGSTSTMLQPRIVGEKHYETAQRVKQTSQRYKELQDIIAILGLDELSEEDRLTVARARKIERFLSQPFFVAEVFTGSPGKYVGLAETIRGFQLILSGELDGLPEQAFYLVGNIDEATAKAMNLEVESKLKK</sequence>
<comment type="function">
    <text evidence="1">Produces ATP from ADP in the presence of a proton gradient across the membrane. The catalytic sites are hosted primarily by the beta subunits.</text>
</comment>
<comment type="catalytic activity">
    <reaction evidence="1">
        <text>ATP + H2O + 4 H(+)(in) = ADP + phosphate + 5 H(+)(out)</text>
        <dbReference type="Rhea" id="RHEA:57720"/>
        <dbReference type="ChEBI" id="CHEBI:15377"/>
        <dbReference type="ChEBI" id="CHEBI:15378"/>
        <dbReference type="ChEBI" id="CHEBI:30616"/>
        <dbReference type="ChEBI" id="CHEBI:43474"/>
        <dbReference type="ChEBI" id="CHEBI:456216"/>
        <dbReference type="EC" id="7.1.2.2"/>
    </reaction>
</comment>
<comment type="subunit">
    <text evidence="1">F-type ATPases have 2 components, CF(1) - the catalytic core - and CF(0) - the membrane proton channel. CF(1) has five subunits: alpha(3), beta(3), gamma(1), delta(1), epsilon(1). CF(0) has four main subunits: a(1), b(1), b'(1) and c(9-12).</text>
</comment>
<comment type="subcellular location">
    <subcellularLocation>
        <location evidence="1">Plastid</location>
        <location evidence="1">Chloroplast thylakoid membrane</location>
        <topology evidence="1">Peripheral membrane protein</topology>
    </subcellularLocation>
</comment>
<comment type="similarity">
    <text evidence="1">Belongs to the ATPase alpha/beta chains family.</text>
</comment>
<gene>
    <name evidence="1" type="primary">atpB</name>
</gene>